<reference key="1">
    <citation type="submission" date="2008-10" db="EMBL/GenBank/DDBJ databases">
        <title>Genome sequence of Bacillus cereus AH187.</title>
        <authorList>
            <person name="Dodson R.J."/>
            <person name="Durkin A.S."/>
            <person name="Rosovitz M.J."/>
            <person name="Rasko D.A."/>
            <person name="Kolsto A.B."/>
            <person name="Okstad O.A."/>
            <person name="Ravel J."/>
            <person name="Sutton G."/>
        </authorList>
    </citation>
    <scope>NUCLEOTIDE SEQUENCE [LARGE SCALE GENOMIC DNA]</scope>
    <source>
        <strain>AH187</strain>
    </source>
</reference>
<keyword id="KW-0067">ATP-binding</keyword>
<keyword id="KW-0143">Chaperone</keyword>
<keyword id="KW-0479">Metal-binding</keyword>
<keyword id="KW-0547">Nucleotide-binding</keyword>
<keyword id="KW-0862">Zinc</keyword>
<proteinExistence type="inferred from homology"/>
<gene>
    <name evidence="1" type="primary">clpX</name>
    <name type="ordered locus">BCAH187_A4608</name>
</gene>
<accession>B7HQN2</accession>
<comment type="function">
    <text evidence="1">ATP-dependent specificity component of the Clp protease. It directs the protease to specific substrates. Can perform chaperone functions in the absence of ClpP.</text>
</comment>
<comment type="subunit">
    <text evidence="1">Component of the ClpX-ClpP complex. Forms a hexameric ring that, in the presence of ATP, binds to fourteen ClpP subunits assembled into a disk-like structure with a central cavity, resembling the structure of eukaryotic proteasomes.</text>
</comment>
<comment type="similarity">
    <text evidence="1">Belongs to the ClpX chaperone family.</text>
</comment>
<evidence type="ECO:0000255" key="1">
    <source>
        <dbReference type="HAMAP-Rule" id="MF_00175"/>
    </source>
</evidence>
<evidence type="ECO:0000255" key="2">
    <source>
        <dbReference type="PROSITE-ProRule" id="PRU01250"/>
    </source>
</evidence>
<dbReference type="EMBL" id="CP001177">
    <property type="protein sequence ID" value="ACJ77951.1"/>
    <property type="molecule type" value="Genomic_DNA"/>
</dbReference>
<dbReference type="SMR" id="B7HQN2"/>
<dbReference type="KEGG" id="bcr:BCAH187_A4608"/>
<dbReference type="HOGENOM" id="CLU_014218_8_2_9"/>
<dbReference type="Proteomes" id="UP000002214">
    <property type="component" value="Chromosome"/>
</dbReference>
<dbReference type="GO" id="GO:0009376">
    <property type="term" value="C:HslUV protease complex"/>
    <property type="evidence" value="ECO:0007669"/>
    <property type="project" value="TreeGrafter"/>
</dbReference>
<dbReference type="GO" id="GO:0005524">
    <property type="term" value="F:ATP binding"/>
    <property type="evidence" value="ECO:0007669"/>
    <property type="project" value="UniProtKB-UniRule"/>
</dbReference>
<dbReference type="GO" id="GO:0016887">
    <property type="term" value="F:ATP hydrolysis activity"/>
    <property type="evidence" value="ECO:0007669"/>
    <property type="project" value="InterPro"/>
</dbReference>
<dbReference type="GO" id="GO:0140662">
    <property type="term" value="F:ATP-dependent protein folding chaperone"/>
    <property type="evidence" value="ECO:0007669"/>
    <property type="project" value="InterPro"/>
</dbReference>
<dbReference type="GO" id="GO:0046983">
    <property type="term" value="F:protein dimerization activity"/>
    <property type="evidence" value="ECO:0007669"/>
    <property type="project" value="InterPro"/>
</dbReference>
<dbReference type="GO" id="GO:0051082">
    <property type="term" value="F:unfolded protein binding"/>
    <property type="evidence" value="ECO:0007669"/>
    <property type="project" value="UniProtKB-UniRule"/>
</dbReference>
<dbReference type="GO" id="GO:0008270">
    <property type="term" value="F:zinc ion binding"/>
    <property type="evidence" value="ECO:0007669"/>
    <property type="project" value="InterPro"/>
</dbReference>
<dbReference type="GO" id="GO:0051301">
    <property type="term" value="P:cell division"/>
    <property type="evidence" value="ECO:0007669"/>
    <property type="project" value="TreeGrafter"/>
</dbReference>
<dbReference type="GO" id="GO:0051603">
    <property type="term" value="P:proteolysis involved in protein catabolic process"/>
    <property type="evidence" value="ECO:0007669"/>
    <property type="project" value="TreeGrafter"/>
</dbReference>
<dbReference type="CDD" id="cd19497">
    <property type="entry name" value="RecA-like_ClpX"/>
    <property type="match status" value="1"/>
</dbReference>
<dbReference type="FunFam" id="1.10.8.60:FF:000002">
    <property type="entry name" value="ATP-dependent Clp protease ATP-binding subunit ClpX"/>
    <property type="match status" value="1"/>
</dbReference>
<dbReference type="FunFam" id="3.40.50.300:FF:000005">
    <property type="entry name" value="ATP-dependent Clp protease ATP-binding subunit ClpX"/>
    <property type="match status" value="1"/>
</dbReference>
<dbReference type="Gene3D" id="1.10.8.60">
    <property type="match status" value="1"/>
</dbReference>
<dbReference type="Gene3D" id="6.20.220.10">
    <property type="entry name" value="ClpX chaperone, C4-type zinc finger domain"/>
    <property type="match status" value="1"/>
</dbReference>
<dbReference type="Gene3D" id="3.40.50.300">
    <property type="entry name" value="P-loop containing nucleotide triphosphate hydrolases"/>
    <property type="match status" value="1"/>
</dbReference>
<dbReference type="HAMAP" id="MF_00175">
    <property type="entry name" value="ClpX"/>
    <property type="match status" value="1"/>
</dbReference>
<dbReference type="InterPro" id="IPR003593">
    <property type="entry name" value="AAA+_ATPase"/>
</dbReference>
<dbReference type="InterPro" id="IPR050052">
    <property type="entry name" value="ATP-dep_Clp_protease_ClpX"/>
</dbReference>
<dbReference type="InterPro" id="IPR003959">
    <property type="entry name" value="ATPase_AAA_core"/>
</dbReference>
<dbReference type="InterPro" id="IPR019489">
    <property type="entry name" value="Clp_ATPase_C"/>
</dbReference>
<dbReference type="InterPro" id="IPR004487">
    <property type="entry name" value="Clp_protease_ATP-bd_su_ClpX"/>
</dbReference>
<dbReference type="InterPro" id="IPR046425">
    <property type="entry name" value="ClpX_bact"/>
</dbReference>
<dbReference type="InterPro" id="IPR027417">
    <property type="entry name" value="P-loop_NTPase"/>
</dbReference>
<dbReference type="InterPro" id="IPR010603">
    <property type="entry name" value="Znf_CppX_C4"/>
</dbReference>
<dbReference type="InterPro" id="IPR038366">
    <property type="entry name" value="Znf_CppX_C4_sf"/>
</dbReference>
<dbReference type="NCBIfam" id="TIGR00382">
    <property type="entry name" value="clpX"/>
    <property type="match status" value="1"/>
</dbReference>
<dbReference type="NCBIfam" id="NF003745">
    <property type="entry name" value="PRK05342.1"/>
    <property type="match status" value="1"/>
</dbReference>
<dbReference type="PANTHER" id="PTHR48102:SF7">
    <property type="entry name" value="ATP-DEPENDENT CLP PROTEASE ATP-BINDING SUBUNIT CLPX-LIKE, MITOCHONDRIAL"/>
    <property type="match status" value="1"/>
</dbReference>
<dbReference type="PANTHER" id="PTHR48102">
    <property type="entry name" value="ATP-DEPENDENT CLP PROTEASE ATP-BINDING SUBUNIT CLPX-LIKE, MITOCHONDRIAL-RELATED"/>
    <property type="match status" value="1"/>
</dbReference>
<dbReference type="Pfam" id="PF07724">
    <property type="entry name" value="AAA_2"/>
    <property type="match status" value="1"/>
</dbReference>
<dbReference type="Pfam" id="PF10431">
    <property type="entry name" value="ClpB_D2-small"/>
    <property type="match status" value="1"/>
</dbReference>
<dbReference type="Pfam" id="PF06689">
    <property type="entry name" value="zf-C4_ClpX"/>
    <property type="match status" value="1"/>
</dbReference>
<dbReference type="SMART" id="SM00382">
    <property type="entry name" value="AAA"/>
    <property type="match status" value="1"/>
</dbReference>
<dbReference type="SMART" id="SM01086">
    <property type="entry name" value="ClpB_D2-small"/>
    <property type="match status" value="1"/>
</dbReference>
<dbReference type="SMART" id="SM00994">
    <property type="entry name" value="zf-C4_ClpX"/>
    <property type="match status" value="1"/>
</dbReference>
<dbReference type="SUPFAM" id="SSF57716">
    <property type="entry name" value="Glucocorticoid receptor-like (DNA-binding domain)"/>
    <property type="match status" value="1"/>
</dbReference>
<dbReference type="SUPFAM" id="SSF52540">
    <property type="entry name" value="P-loop containing nucleoside triphosphate hydrolases"/>
    <property type="match status" value="1"/>
</dbReference>
<dbReference type="PROSITE" id="PS51902">
    <property type="entry name" value="CLPX_ZB"/>
    <property type="match status" value="1"/>
</dbReference>
<organism>
    <name type="scientific">Bacillus cereus (strain AH187)</name>
    <dbReference type="NCBI Taxonomy" id="405534"/>
    <lineage>
        <taxon>Bacteria</taxon>
        <taxon>Bacillati</taxon>
        <taxon>Bacillota</taxon>
        <taxon>Bacilli</taxon>
        <taxon>Bacillales</taxon>
        <taxon>Bacillaceae</taxon>
        <taxon>Bacillus</taxon>
        <taxon>Bacillus cereus group</taxon>
    </lineage>
</organism>
<sequence length="419" mass="46199">MFKFNDEKGQLKCSFCGKTQTQVRKLVAGPGVYICDECIELCTEIVQEELAKDEEVEFKDVPKPVEIREILDEYVIGQDNAKKALAVAVYNHYKRINSNSKIDDVELAKSNIALIGPTGSGKTLLAQTLARILNVPFAIADATSLTEAGYVGEDVENILLKLIQAADYDVEKAEKGIIYIDEIDKVARKSENPSITRDVSGEGVQQALLKILEGTVASVPPQGGRKHPHQEFIQIDTTNILFICGGAFDGIEPIIKRRLGEKVIGFGSEKKNADVNEKHVLSHVLPEDLLRFGLIPEFIGRLPVIANLEPLDEDALVDILTKPKNALVKQFQKLLELDDVELEFEEGALIEIAKKAIERKTGARGLRSIIEGLMLEVMFELPSRKDIEKCILTKETVADNAAPKLVLQDGTVLDTKTSA</sequence>
<name>CLPX_BACC7</name>
<feature type="chain" id="PRO_1000189679" description="ATP-dependent Clp protease ATP-binding subunit ClpX">
    <location>
        <begin position="1"/>
        <end position="419"/>
    </location>
</feature>
<feature type="domain" description="ClpX-type ZB" evidence="2">
    <location>
        <begin position="1"/>
        <end position="54"/>
    </location>
</feature>
<feature type="binding site" evidence="2">
    <location>
        <position position="13"/>
    </location>
    <ligand>
        <name>Zn(2+)</name>
        <dbReference type="ChEBI" id="CHEBI:29105"/>
    </ligand>
</feature>
<feature type="binding site" evidence="2">
    <location>
        <position position="16"/>
    </location>
    <ligand>
        <name>Zn(2+)</name>
        <dbReference type="ChEBI" id="CHEBI:29105"/>
    </ligand>
</feature>
<feature type="binding site" evidence="2">
    <location>
        <position position="35"/>
    </location>
    <ligand>
        <name>Zn(2+)</name>
        <dbReference type="ChEBI" id="CHEBI:29105"/>
    </ligand>
</feature>
<feature type="binding site" evidence="2">
    <location>
        <position position="38"/>
    </location>
    <ligand>
        <name>Zn(2+)</name>
        <dbReference type="ChEBI" id="CHEBI:29105"/>
    </ligand>
</feature>
<feature type="binding site" evidence="1">
    <location>
        <begin position="117"/>
        <end position="124"/>
    </location>
    <ligand>
        <name>ATP</name>
        <dbReference type="ChEBI" id="CHEBI:30616"/>
    </ligand>
</feature>
<protein>
    <recommendedName>
        <fullName evidence="1">ATP-dependent Clp protease ATP-binding subunit ClpX</fullName>
    </recommendedName>
</protein>